<feature type="chain" id="PRO_1000085222" description="Chaperone protein DnaJ">
    <location>
        <begin position="1"/>
        <end position="383"/>
    </location>
</feature>
<feature type="domain" description="J" evidence="1">
    <location>
        <begin position="5"/>
        <end position="70"/>
    </location>
</feature>
<feature type="repeat" description="CXXCXGXG motif">
    <location>
        <begin position="150"/>
        <end position="157"/>
    </location>
</feature>
<feature type="repeat" description="CXXCXGXG motif">
    <location>
        <begin position="167"/>
        <end position="174"/>
    </location>
</feature>
<feature type="repeat" description="CXXCXGXG motif">
    <location>
        <begin position="189"/>
        <end position="196"/>
    </location>
</feature>
<feature type="repeat" description="CXXCXGXG motif">
    <location>
        <begin position="203"/>
        <end position="210"/>
    </location>
</feature>
<feature type="zinc finger region" description="CR-type" evidence="1">
    <location>
        <begin position="137"/>
        <end position="215"/>
    </location>
</feature>
<feature type="binding site" evidence="1">
    <location>
        <position position="150"/>
    </location>
    <ligand>
        <name>Zn(2+)</name>
        <dbReference type="ChEBI" id="CHEBI:29105"/>
        <label>1</label>
    </ligand>
</feature>
<feature type="binding site" evidence="1">
    <location>
        <position position="153"/>
    </location>
    <ligand>
        <name>Zn(2+)</name>
        <dbReference type="ChEBI" id="CHEBI:29105"/>
        <label>1</label>
    </ligand>
</feature>
<feature type="binding site" evidence="1">
    <location>
        <position position="167"/>
    </location>
    <ligand>
        <name>Zn(2+)</name>
        <dbReference type="ChEBI" id="CHEBI:29105"/>
        <label>2</label>
    </ligand>
</feature>
<feature type="binding site" evidence="1">
    <location>
        <position position="170"/>
    </location>
    <ligand>
        <name>Zn(2+)</name>
        <dbReference type="ChEBI" id="CHEBI:29105"/>
        <label>2</label>
    </ligand>
</feature>
<feature type="binding site" evidence="1">
    <location>
        <position position="189"/>
    </location>
    <ligand>
        <name>Zn(2+)</name>
        <dbReference type="ChEBI" id="CHEBI:29105"/>
        <label>2</label>
    </ligand>
</feature>
<feature type="binding site" evidence="1">
    <location>
        <position position="192"/>
    </location>
    <ligand>
        <name>Zn(2+)</name>
        <dbReference type="ChEBI" id="CHEBI:29105"/>
        <label>2</label>
    </ligand>
</feature>
<feature type="binding site" evidence="1">
    <location>
        <position position="203"/>
    </location>
    <ligand>
        <name>Zn(2+)</name>
        <dbReference type="ChEBI" id="CHEBI:29105"/>
        <label>1</label>
    </ligand>
</feature>
<feature type="binding site" evidence="1">
    <location>
        <position position="206"/>
    </location>
    <ligand>
        <name>Zn(2+)</name>
        <dbReference type="ChEBI" id="CHEBI:29105"/>
        <label>1</label>
    </ligand>
</feature>
<dbReference type="EMBL" id="AP007255">
    <property type="protein sequence ID" value="BAE53245.1"/>
    <property type="molecule type" value="Genomic_DNA"/>
</dbReference>
<dbReference type="RefSeq" id="WP_011386785.1">
    <property type="nucleotide sequence ID" value="NC_007626.1"/>
</dbReference>
<dbReference type="SMR" id="Q2VYT0"/>
<dbReference type="STRING" id="342108.amb4441"/>
<dbReference type="KEGG" id="mag:amb4441"/>
<dbReference type="HOGENOM" id="CLU_017633_0_7_5"/>
<dbReference type="OrthoDB" id="9779889at2"/>
<dbReference type="Proteomes" id="UP000007058">
    <property type="component" value="Chromosome"/>
</dbReference>
<dbReference type="GO" id="GO:0005737">
    <property type="term" value="C:cytoplasm"/>
    <property type="evidence" value="ECO:0007669"/>
    <property type="project" value="UniProtKB-SubCell"/>
</dbReference>
<dbReference type="GO" id="GO:0005524">
    <property type="term" value="F:ATP binding"/>
    <property type="evidence" value="ECO:0007669"/>
    <property type="project" value="InterPro"/>
</dbReference>
<dbReference type="GO" id="GO:0031072">
    <property type="term" value="F:heat shock protein binding"/>
    <property type="evidence" value="ECO:0007669"/>
    <property type="project" value="InterPro"/>
</dbReference>
<dbReference type="GO" id="GO:0051082">
    <property type="term" value="F:unfolded protein binding"/>
    <property type="evidence" value="ECO:0007669"/>
    <property type="project" value="UniProtKB-UniRule"/>
</dbReference>
<dbReference type="GO" id="GO:0008270">
    <property type="term" value="F:zinc ion binding"/>
    <property type="evidence" value="ECO:0007669"/>
    <property type="project" value="UniProtKB-UniRule"/>
</dbReference>
<dbReference type="GO" id="GO:0051085">
    <property type="term" value="P:chaperone cofactor-dependent protein refolding"/>
    <property type="evidence" value="ECO:0007669"/>
    <property type="project" value="TreeGrafter"/>
</dbReference>
<dbReference type="GO" id="GO:0006260">
    <property type="term" value="P:DNA replication"/>
    <property type="evidence" value="ECO:0007669"/>
    <property type="project" value="UniProtKB-KW"/>
</dbReference>
<dbReference type="GO" id="GO:0042026">
    <property type="term" value="P:protein refolding"/>
    <property type="evidence" value="ECO:0007669"/>
    <property type="project" value="TreeGrafter"/>
</dbReference>
<dbReference type="GO" id="GO:0009408">
    <property type="term" value="P:response to heat"/>
    <property type="evidence" value="ECO:0007669"/>
    <property type="project" value="InterPro"/>
</dbReference>
<dbReference type="CDD" id="cd06257">
    <property type="entry name" value="DnaJ"/>
    <property type="match status" value="1"/>
</dbReference>
<dbReference type="CDD" id="cd10747">
    <property type="entry name" value="DnaJ_C"/>
    <property type="match status" value="1"/>
</dbReference>
<dbReference type="CDD" id="cd10719">
    <property type="entry name" value="DnaJ_zf"/>
    <property type="match status" value="1"/>
</dbReference>
<dbReference type="FunFam" id="1.10.287.110:FF:000031">
    <property type="entry name" value="Molecular chaperone DnaJ"/>
    <property type="match status" value="1"/>
</dbReference>
<dbReference type="FunFam" id="2.10.230.10:FF:000002">
    <property type="entry name" value="Molecular chaperone DnaJ"/>
    <property type="match status" value="1"/>
</dbReference>
<dbReference type="FunFam" id="2.60.260.20:FF:000004">
    <property type="entry name" value="Molecular chaperone DnaJ"/>
    <property type="match status" value="1"/>
</dbReference>
<dbReference type="Gene3D" id="1.10.287.110">
    <property type="entry name" value="DnaJ domain"/>
    <property type="match status" value="1"/>
</dbReference>
<dbReference type="Gene3D" id="2.10.230.10">
    <property type="entry name" value="Heat shock protein DnaJ, cysteine-rich domain"/>
    <property type="match status" value="1"/>
</dbReference>
<dbReference type="Gene3D" id="2.60.260.20">
    <property type="entry name" value="Urease metallochaperone UreE, N-terminal domain"/>
    <property type="match status" value="2"/>
</dbReference>
<dbReference type="HAMAP" id="MF_01152">
    <property type="entry name" value="DnaJ"/>
    <property type="match status" value="1"/>
</dbReference>
<dbReference type="InterPro" id="IPR012724">
    <property type="entry name" value="DnaJ"/>
</dbReference>
<dbReference type="InterPro" id="IPR002939">
    <property type="entry name" value="DnaJ_C"/>
</dbReference>
<dbReference type="InterPro" id="IPR001623">
    <property type="entry name" value="DnaJ_domain"/>
</dbReference>
<dbReference type="InterPro" id="IPR018253">
    <property type="entry name" value="DnaJ_domain_CS"/>
</dbReference>
<dbReference type="InterPro" id="IPR008971">
    <property type="entry name" value="HSP40/DnaJ_pept-bd"/>
</dbReference>
<dbReference type="InterPro" id="IPR001305">
    <property type="entry name" value="HSP_DnaJ_Cys-rich_dom"/>
</dbReference>
<dbReference type="InterPro" id="IPR036410">
    <property type="entry name" value="HSP_DnaJ_Cys-rich_dom_sf"/>
</dbReference>
<dbReference type="InterPro" id="IPR036869">
    <property type="entry name" value="J_dom_sf"/>
</dbReference>
<dbReference type="NCBIfam" id="TIGR02349">
    <property type="entry name" value="DnaJ_bact"/>
    <property type="match status" value="1"/>
</dbReference>
<dbReference type="NCBIfam" id="NF008035">
    <property type="entry name" value="PRK10767.1"/>
    <property type="match status" value="1"/>
</dbReference>
<dbReference type="PANTHER" id="PTHR43096:SF48">
    <property type="entry name" value="CHAPERONE PROTEIN DNAJ"/>
    <property type="match status" value="1"/>
</dbReference>
<dbReference type="PANTHER" id="PTHR43096">
    <property type="entry name" value="DNAJ HOMOLOG 1, MITOCHONDRIAL-RELATED"/>
    <property type="match status" value="1"/>
</dbReference>
<dbReference type="Pfam" id="PF00226">
    <property type="entry name" value="DnaJ"/>
    <property type="match status" value="1"/>
</dbReference>
<dbReference type="Pfam" id="PF01556">
    <property type="entry name" value="DnaJ_C"/>
    <property type="match status" value="1"/>
</dbReference>
<dbReference type="Pfam" id="PF00684">
    <property type="entry name" value="DnaJ_CXXCXGXG"/>
    <property type="match status" value="1"/>
</dbReference>
<dbReference type="PRINTS" id="PR00625">
    <property type="entry name" value="JDOMAIN"/>
</dbReference>
<dbReference type="SMART" id="SM00271">
    <property type="entry name" value="DnaJ"/>
    <property type="match status" value="1"/>
</dbReference>
<dbReference type="SUPFAM" id="SSF46565">
    <property type="entry name" value="Chaperone J-domain"/>
    <property type="match status" value="1"/>
</dbReference>
<dbReference type="SUPFAM" id="SSF57938">
    <property type="entry name" value="DnaJ/Hsp40 cysteine-rich domain"/>
    <property type="match status" value="1"/>
</dbReference>
<dbReference type="SUPFAM" id="SSF49493">
    <property type="entry name" value="HSP40/DnaJ peptide-binding domain"/>
    <property type="match status" value="2"/>
</dbReference>
<dbReference type="PROSITE" id="PS00636">
    <property type="entry name" value="DNAJ_1"/>
    <property type="match status" value="1"/>
</dbReference>
<dbReference type="PROSITE" id="PS50076">
    <property type="entry name" value="DNAJ_2"/>
    <property type="match status" value="1"/>
</dbReference>
<dbReference type="PROSITE" id="PS51188">
    <property type="entry name" value="ZF_CR"/>
    <property type="match status" value="1"/>
</dbReference>
<evidence type="ECO:0000255" key="1">
    <source>
        <dbReference type="HAMAP-Rule" id="MF_01152"/>
    </source>
</evidence>
<reference key="1">
    <citation type="journal article" date="2005" name="DNA Res.">
        <title>Complete genome sequence of the facultative anaerobic magnetotactic bacterium Magnetospirillum sp. strain AMB-1.</title>
        <authorList>
            <person name="Matsunaga T."/>
            <person name="Okamura Y."/>
            <person name="Fukuda Y."/>
            <person name="Wahyudi A.T."/>
            <person name="Murase Y."/>
            <person name="Takeyama H."/>
        </authorList>
    </citation>
    <scope>NUCLEOTIDE SEQUENCE [LARGE SCALE GENOMIC DNA]</scope>
    <source>
        <strain>ATCC 700264 / AMB-1</strain>
    </source>
</reference>
<sequence length="383" mass="41046">MSKQDYYELLGVEKGASPDDIKKAYRKQAMQFHPDRNPGNADAEQKFKEINEAYDVLKDEQKRAAYDRFGHAAFEQGGPGGGGGGGFGGFGGGGFSDIFDEMFGEFMGGGGRRGQSTGRGADLRYNMDISLEDAFAGKTATVKVPSSAPCEDCKGTGGKDGAQPVTCSACHGHGKVRQQQGFFTIERTCPTCQGMGKIIKDPCRSCGGSGRTRKEKTLQVNIPAGVEDGTRIRLAGEGEAGMRGAPAGDLYIFLSIAAHRIFQRDGANIFCRVPIPMTTAALGGTIEVPTIDGSKAKVTIPEGTQTGNQFRLRSKGMSVLRSPARGDMFIQAVVETPVNLTKRQKELLNEFNEAGEGEKAKNSPESQGFFAKVKELWEDLKEG</sequence>
<comment type="function">
    <text evidence="1">Participates actively in the response to hyperosmotic and heat shock by preventing the aggregation of stress-denatured proteins and by disaggregating proteins, also in an autonomous, DnaK-independent fashion. Unfolded proteins bind initially to DnaJ; upon interaction with the DnaJ-bound protein, DnaK hydrolyzes its bound ATP, resulting in the formation of a stable complex. GrpE releases ADP from DnaK; ATP binding to DnaK triggers the release of the substrate protein, thus completing the reaction cycle. Several rounds of ATP-dependent interactions between DnaJ, DnaK and GrpE are required for fully efficient folding. Also involved, together with DnaK and GrpE, in the DNA replication of plasmids through activation of initiation proteins.</text>
</comment>
<comment type="cofactor">
    <cofactor evidence="1">
        <name>Zn(2+)</name>
        <dbReference type="ChEBI" id="CHEBI:29105"/>
    </cofactor>
    <text evidence="1">Binds 2 Zn(2+) ions per monomer.</text>
</comment>
<comment type="subunit">
    <text evidence="1">Homodimer.</text>
</comment>
<comment type="subcellular location">
    <subcellularLocation>
        <location evidence="1">Cytoplasm</location>
    </subcellularLocation>
</comment>
<comment type="domain">
    <text evidence="1">The J domain is necessary and sufficient to stimulate DnaK ATPase activity. Zinc center 1 plays an important role in the autonomous, DnaK-independent chaperone activity of DnaJ. Zinc center 2 is essential for interaction with DnaK and for DnaJ activity.</text>
</comment>
<comment type="similarity">
    <text evidence="1">Belongs to the DnaJ family.</text>
</comment>
<gene>
    <name evidence="1" type="primary">dnaJ</name>
    <name type="ordered locus">amb4441</name>
</gene>
<organism>
    <name type="scientific">Paramagnetospirillum magneticum (strain ATCC 700264 / AMB-1)</name>
    <name type="common">Magnetospirillum magneticum</name>
    <dbReference type="NCBI Taxonomy" id="342108"/>
    <lineage>
        <taxon>Bacteria</taxon>
        <taxon>Pseudomonadati</taxon>
        <taxon>Pseudomonadota</taxon>
        <taxon>Alphaproteobacteria</taxon>
        <taxon>Rhodospirillales</taxon>
        <taxon>Magnetospirillaceae</taxon>
        <taxon>Paramagnetospirillum</taxon>
    </lineage>
</organism>
<proteinExistence type="inferred from homology"/>
<name>DNAJ_PARM1</name>
<keyword id="KW-0143">Chaperone</keyword>
<keyword id="KW-0963">Cytoplasm</keyword>
<keyword id="KW-0235">DNA replication</keyword>
<keyword id="KW-0479">Metal-binding</keyword>
<keyword id="KW-0677">Repeat</keyword>
<keyword id="KW-0346">Stress response</keyword>
<keyword id="KW-0862">Zinc</keyword>
<keyword id="KW-0863">Zinc-finger</keyword>
<protein>
    <recommendedName>
        <fullName evidence="1">Chaperone protein DnaJ</fullName>
    </recommendedName>
</protein>
<accession>Q2VYT0</accession>